<reference key="1">
    <citation type="journal article" date="2011" name="Stand. Genomic Sci.">
        <title>Complete genome sequence of the halophilic and highly halotolerant Chromohalobacter salexigens type strain (1H11(T)).</title>
        <authorList>
            <person name="Copeland A."/>
            <person name="O'Connor K."/>
            <person name="Lucas S."/>
            <person name="Lapidus A."/>
            <person name="Berry K.W."/>
            <person name="Detter J.C."/>
            <person name="Del Rio T.G."/>
            <person name="Hammon N."/>
            <person name="Dalin E."/>
            <person name="Tice H."/>
            <person name="Pitluck S."/>
            <person name="Bruce D."/>
            <person name="Goodwin L."/>
            <person name="Han C."/>
            <person name="Tapia R."/>
            <person name="Saunders E."/>
            <person name="Schmutz J."/>
            <person name="Brettin T."/>
            <person name="Larimer F."/>
            <person name="Land M."/>
            <person name="Hauser L."/>
            <person name="Vargas C."/>
            <person name="Nieto J.J."/>
            <person name="Kyrpides N.C."/>
            <person name="Ivanova N."/>
            <person name="Goker M."/>
            <person name="Klenk H.P."/>
            <person name="Csonka L.N."/>
            <person name="Woyke T."/>
        </authorList>
    </citation>
    <scope>NUCLEOTIDE SEQUENCE [LARGE SCALE GENOMIC DNA]</scope>
    <source>
        <strain>ATCC BAA-138 / DSM 3043 / CIP 106854 / NCIMB 13768 / 1H11</strain>
    </source>
</reference>
<protein>
    <recommendedName>
        <fullName evidence="1">Soluble pyridine nucleotide transhydrogenase</fullName>
        <shortName evidence="1">STH</shortName>
        <ecNumber evidence="1">1.6.1.1</ecNumber>
    </recommendedName>
    <alternativeName>
        <fullName evidence="1">NAD(P)(+) transhydrogenase [B-specific]</fullName>
    </alternativeName>
</protein>
<gene>
    <name evidence="1" type="primary">sthA</name>
    <name type="ordered locus">Csal_1577</name>
</gene>
<keyword id="KW-0963">Cytoplasm</keyword>
<keyword id="KW-0274">FAD</keyword>
<keyword id="KW-0285">Flavoprotein</keyword>
<keyword id="KW-0520">NAD</keyword>
<keyword id="KW-0521">NADP</keyword>
<keyword id="KW-0560">Oxidoreductase</keyword>
<keyword id="KW-1185">Reference proteome</keyword>
<proteinExistence type="inferred from homology"/>
<name>STHA_CHRSD</name>
<comment type="function">
    <text evidence="1">Conversion of NADPH, generated by peripheral catabolic pathways, to NADH, which can enter the respiratory chain for energy generation.</text>
</comment>
<comment type="catalytic activity">
    <reaction evidence="1">
        <text>NAD(+) + NADPH = NADH + NADP(+)</text>
        <dbReference type="Rhea" id="RHEA:11692"/>
        <dbReference type="ChEBI" id="CHEBI:57540"/>
        <dbReference type="ChEBI" id="CHEBI:57783"/>
        <dbReference type="ChEBI" id="CHEBI:57945"/>
        <dbReference type="ChEBI" id="CHEBI:58349"/>
        <dbReference type="EC" id="1.6.1.1"/>
    </reaction>
</comment>
<comment type="cofactor">
    <cofactor evidence="1">
        <name>FAD</name>
        <dbReference type="ChEBI" id="CHEBI:57692"/>
    </cofactor>
    <text evidence="1">Binds 1 FAD per subunit.</text>
</comment>
<comment type="subcellular location">
    <subcellularLocation>
        <location evidence="1">Cytoplasm</location>
    </subcellularLocation>
</comment>
<comment type="similarity">
    <text evidence="1">Belongs to the class-I pyridine nucleotide-disulfide oxidoreductase family.</text>
</comment>
<dbReference type="EC" id="1.6.1.1" evidence="1"/>
<dbReference type="EMBL" id="CP000285">
    <property type="protein sequence ID" value="ABE58930.1"/>
    <property type="molecule type" value="Genomic_DNA"/>
</dbReference>
<dbReference type="SMR" id="Q1QX78"/>
<dbReference type="STRING" id="290398.Csal_1577"/>
<dbReference type="KEGG" id="csa:Csal_1577"/>
<dbReference type="eggNOG" id="COG1249">
    <property type="taxonomic scope" value="Bacteria"/>
</dbReference>
<dbReference type="HOGENOM" id="CLU_016755_0_0_6"/>
<dbReference type="OrthoDB" id="9800167at2"/>
<dbReference type="Proteomes" id="UP000000239">
    <property type="component" value="Chromosome"/>
</dbReference>
<dbReference type="GO" id="GO:0005829">
    <property type="term" value="C:cytosol"/>
    <property type="evidence" value="ECO:0007669"/>
    <property type="project" value="TreeGrafter"/>
</dbReference>
<dbReference type="GO" id="GO:0004148">
    <property type="term" value="F:dihydrolipoyl dehydrogenase (NADH) activity"/>
    <property type="evidence" value="ECO:0007669"/>
    <property type="project" value="TreeGrafter"/>
</dbReference>
<dbReference type="GO" id="GO:0050660">
    <property type="term" value="F:flavin adenine dinucleotide binding"/>
    <property type="evidence" value="ECO:0007669"/>
    <property type="project" value="TreeGrafter"/>
</dbReference>
<dbReference type="GO" id="GO:0003957">
    <property type="term" value="F:NAD(P)+ transhydrogenase (Si-specific) activity"/>
    <property type="evidence" value="ECO:0007669"/>
    <property type="project" value="UniProtKB-UniRule"/>
</dbReference>
<dbReference type="GO" id="GO:0006103">
    <property type="term" value="P:2-oxoglutarate metabolic process"/>
    <property type="evidence" value="ECO:0007669"/>
    <property type="project" value="TreeGrafter"/>
</dbReference>
<dbReference type="GO" id="GO:0006739">
    <property type="term" value="P:NADP metabolic process"/>
    <property type="evidence" value="ECO:0007669"/>
    <property type="project" value="UniProtKB-UniRule"/>
</dbReference>
<dbReference type="FunFam" id="3.30.390.30:FF:000002">
    <property type="entry name" value="Soluble pyridine nucleotide transhydrogenase"/>
    <property type="match status" value="1"/>
</dbReference>
<dbReference type="FunFam" id="3.50.50.60:FF:000008">
    <property type="entry name" value="Soluble pyridine nucleotide transhydrogenase"/>
    <property type="match status" value="1"/>
</dbReference>
<dbReference type="Gene3D" id="3.30.390.30">
    <property type="match status" value="1"/>
</dbReference>
<dbReference type="Gene3D" id="3.50.50.60">
    <property type="entry name" value="FAD/NAD(P)-binding domain"/>
    <property type="match status" value="2"/>
</dbReference>
<dbReference type="HAMAP" id="MF_00247">
    <property type="entry name" value="SthA"/>
    <property type="match status" value="1"/>
</dbReference>
<dbReference type="InterPro" id="IPR050151">
    <property type="entry name" value="Class-I_Pyr_Nuc-Dis_Oxidored"/>
</dbReference>
<dbReference type="InterPro" id="IPR036188">
    <property type="entry name" value="FAD/NAD-bd_sf"/>
</dbReference>
<dbReference type="InterPro" id="IPR023753">
    <property type="entry name" value="FAD/NAD-binding_dom"/>
</dbReference>
<dbReference type="InterPro" id="IPR016156">
    <property type="entry name" value="FAD/NAD-linked_Rdtase_dimer_sf"/>
</dbReference>
<dbReference type="InterPro" id="IPR001100">
    <property type="entry name" value="Pyr_nuc-diS_OxRdtase"/>
</dbReference>
<dbReference type="InterPro" id="IPR004099">
    <property type="entry name" value="Pyr_nucl-diS_OxRdtase_dimer"/>
</dbReference>
<dbReference type="InterPro" id="IPR022962">
    <property type="entry name" value="STH_gammaproteobact"/>
</dbReference>
<dbReference type="NCBIfam" id="NF003585">
    <property type="entry name" value="PRK05249.1"/>
    <property type="match status" value="1"/>
</dbReference>
<dbReference type="PANTHER" id="PTHR22912">
    <property type="entry name" value="DISULFIDE OXIDOREDUCTASE"/>
    <property type="match status" value="1"/>
</dbReference>
<dbReference type="PANTHER" id="PTHR22912:SF93">
    <property type="entry name" value="SOLUBLE PYRIDINE NUCLEOTIDE TRANSHYDROGENASE"/>
    <property type="match status" value="1"/>
</dbReference>
<dbReference type="Pfam" id="PF07992">
    <property type="entry name" value="Pyr_redox_2"/>
    <property type="match status" value="1"/>
</dbReference>
<dbReference type="Pfam" id="PF02852">
    <property type="entry name" value="Pyr_redox_dim"/>
    <property type="match status" value="1"/>
</dbReference>
<dbReference type="PIRSF" id="PIRSF000350">
    <property type="entry name" value="Mercury_reductase_MerA"/>
    <property type="match status" value="1"/>
</dbReference>
<dbReference type="PRINTS" id="PR00368">
    <property type="entry name" value="FADPNR"/>
</dbReference>
<dbReference type="PRINTS" id="PR00411">
    <property type="entry name" value="PNDRDTASEI"/>
</dbReference>
<dbReference type="SUPFAM" id="SSF51905">
    <property type="entry name" value="FAD/NAD(P)-binding domain"/>
    <property type="match status" value="1"/>
</dbReference>
<dbReference type="SUPFAM" id="SSF55424">
    <property type="entry name" value="FAD/NAD-linked reductases, dimerisation (C-terminal) domain"/>
    <property type="match status" value="1"/>
</dbReference>
<accession>Q1QX78</accession>
<feature type="chain" id="PRO_0000260231" description="Soluble pyridine nucleotide transhydrogenase">
    <location>
        <begin position="1"/>
        <end position="463"/>
    </location>
</feature>
<feature type="binding site" evidence="1">
    <location>
        <begin position="35"/>
        <end position="44"/>
    </location>
    <ligand>
        <name>FAD</name>
        <dbReference type="ChEBI" id="CHEBI:57692"/>
    </ligand>
</feature>
<organism>
    <name type="scientific">Chromohalobacter salexigens (strain ATCC BAA-138 / DSM 3043 / CIP 106854 / NCIMB 13768 / 1H11)</name>
    <dbReference type="NCBI Taxonomy" id="290398"/>
    <lineage>
        <taxon>Bacteria</taxon>
        <taxon>Pseudomonadati</taxon>
        <taxon>Pseudomonadota</taxon>
        <taxon>Gammaproteobacteria</taxon>
        <taxon>Oceanospirillales</taxon>
        <taxon>Halomonadaceae</taxon>
        <taxon>Chromohalobacter</taxon>
    </lineage>
</organism>
<sequence>MAVHNFDVVVIGSGPAGESAAINAAKHGKRVAIVEKQQAVGGNCTHWGTIPSKALRHQVKQIMQFNTNRMFRDIGEPRWFSFPRVLERSKVTIDQQVEMRTQFYSRNRINLFFGVARFRDEHTLTVRDNQDGVEELCAQQFVIATGSRPYRPADINFRHPRIYCSDTILGLSHTPRTLIIFGAGVIGSEYASIFSGLGVKVDLIDMRERLLSFLDDEISDALSYHLRQNGVLVRHNEDYESIEGDESGVIVKLKSGKRLRADAFLWANGRTGNTDELGLENIGLEPNGRGQLQVDEHYRTMVPHIYAVGDVIGWPSLASAAYDQGRSASDDFLDEDFRFVEDIPTGIYTIPEISSVGKNERELTEAKVPYEVAQAFFKDTARAQITGDTVGMLKILFHRETLEILGIHCFGDQASEILHIGQAIMQQKGEANTLKYFINTTFNYPTMAEAYRVAAQNGLNRVF</sequence>
<evidence type="ECO:0000255" key="1">
    <source>
        <dbReference type="HAMAP-Rule" id="MF_00247"/>
    </source>
</evidence>